<reference key="1">
    <citation type="journal article" date="2007" name="Proc. Natl. Acad. Sci. U.S.A.">
        <title>Genome plasticity of BCG and impact on vaccine efficacy.</title>
        <authorList>
            <person name="Brosch R."/>
            <person name="Gordon S.V."/>
            <person name="Garnier T."/>
            <person name="Eiglmeier K."/>
            <person name="Frigui W."/>
            <person name="Valenti P."/>
            <person name="Dos Santos S."/>
            <person name="Duthoy S."/>
            <person name="Lacroix C."/>
            <person name="Garcia-Pelayo C."/>
            <person name="Inwald J.K."/>
            <person name="Golby P."/>
            <person name="Garcia J.N."/>
            <person name="Hewinson R.G."/>
            <person name="Behr M.A."/>
            <person name="Quail M.A."/>
            <person name="Churcher C."/>
            <person name="Barrell B.G."/>
            <person name="Parkhill J."/>
            <person name="Cole S.T."/>
        </authorList>
    </citation>
    <scope>NUCLEOTIDE SEQUENCE [LARGE SCALE GENOMIC DNA]</scope>
    <source>
        <strain>BCG / Pasteur 1173P2</strain>
    </source>
</reference>
<name>SYC_MYCBP</name>
<sequence length="469" mass="51855">MTDRARLRLHDTAAGVVRDFVPLRPGHVSIYLCGATVQGLPHIGHVRSGVAFDILRRWLLARGYDVAFIRNVTDIEDKILAKAAAAGRPWWEWAATHERAFTAAYDALDVLPPSAEPRATGHITQMIEMIERLIQAGHAYTGGGDVYFDVLSYPEYGQLSGHKIDDVHQGEGVAAGKRDQRDFTLWKGEKPGEPSWPTPWGRGRPGWHLECSAMARSYLGPEFDIHCGGMDLVFPHHENEIAQSRAAGDGFARYWLHNGWVTMGGEKMSKSLGNVLSMPAMLQRVRPAELRYYLGSAHYRSMLEFSETAMQDAVKAYVGLEDFLHRVRTRVGAVCPGDPTPRFAEALDDDLSVPIALAEIHHVRAEGNRALDAGDHDGALRSASAIRAMMGILGCDPLDQRWESRDETSAALAAVDVLVQAELQNREKAREQRNWALADEIRGRLKRAGIEVTDTADGPQWSLLGGDTK</sequence>
<dbReference type="EC" id="6.1.1.16" evidence="1"/>
<dbReference type="EMBL" id="AM408590">
    <property type="protein sequence ID" value="CAL73634.1"/>
    <property type="molecule type" value="Genomic_DNA"/>
</dbReference>
<dbReference type="RefSeq" id="WP_003900108.1">
    <property type="nucleotide sequence ID" value="NC_008769.1"/>
</dbReference>
<dbReference type="SMR" id="A1KPR6"/>
<dbReference type="GeneID" id="45427568"/>
<dbReference type="KEGG" id="mbb:BCG_3645c"/>
<dbReference type="HOGENOM" id="CLU_013528_0_1_11"/>
<dbReference type="Proteomes" id="UP000001472">
    <property type="component" value="Chromosome"/>
</dbReference>
<dbReference type="GO" id="GO:0005829">
    <property type="term" value="C:cytosol"/>
    <property type="evidence" value="ECO:0007669"/>
    <property type="project" value="TreeGrafter"/>
</dbReference>
<dbReference type="GO" id="GO:0005524">
    <property type="term" value="F:ATP binding"/>
    <property type="evidence" value="ECO:0007669"/>
    <property type="project" value="UniProtKB-UniRule"/>
</dbReference>
<dbReference type="GO" id="GO:0004817">
    <property type="term" value="F:cysteine-tRNA ligase activity"/>
    <property type="evidence" value="ECO:0007669"/>
    <property type="project" value="UniProtKB-UniRule"/>
</dbReference>
<dbReference type="GO" id="GO:0008270">
    <property type="term" value="F:zinc ion binding"/>
    <property type="evidence" value="ECO:0007669"/>
    <property type="project" value="UniProtKB-UniRule"/>
</dbReference>
<dbReference type="GO" id="GO:0006423">
    <property type="term" value="P:cysteinyl-tRNA aminoacylation"/>
    <property type="evidence" value="ECO:0007669"/>
    <property type="project" value="UniProtKB-UniRule"/>
</dbReference>
<dbReference type="CDD" id="cd00672">
    <property type="entry name" value="CysRS_core"/>
    <property type="match status" value="1"/>
</dbReference>
<dbReference type="FunFam" id="1.20.120.1910:FF:000006">
    <property type="entry name" value="Cysteine--tRNA ligase"/>
    <property type="match status" value="1"/>
</dbReference>
<dbReference type="FunFam" id="3.40.50.620:FF:000068">
    <property type="entry name" value="Cysteine--tRNA ligase"/>
    <property type="match status" value="1"/>
</dbReference>
<dbReference type="Gene3D" id="1.20.120.1910">
    <property type="entry name" value="Cysteine-tRNA ligase, C-terminal anti-codon recognition domain"/>
    <property type="match status" value="1"/>
</dbReference>
<dbReference type="Gene3D" id="3.40.50.620">
    <property type="entry name" value="HUPs"/>
    <property type="match status" value="1"/>
</dbReference>
<dbReference type="HAMAP" id="MF_00041">
    <property type="entry name" value="Cys_tRNA_synth"/>
    <property type="match status" value="1"/>
</dbReference>
<dbReference type="InterPro" id="IPR015803">
    <property type="entry name" value="Cys-tRNA-ligase"/>
</dbReference>
<dbReference type="InterPro" id="IPR015273">
    <property type="entry name" value="Cys-tRNA-synt_Ia_DALR"/>
</dbReference>
<dbReference type="InterPro" id="IPR024909">
    <property type="entry name" value="Cys-tRNA/MSH_ligase"/>
</dbReference>
<dbReference type="InterPro" id="IPR014729">
    <property type="entry name" value="Rossmann-like_a/b/a_fold"/>
</dbReference>
<dbReference type="InterPro" id="IPR032678">
    <property type="entry name" value="tRNA-synt_1_cat_dom"/>
</dbReference>
<dbReference type="InterPro" id="IPR009080">
    <property type="entry name" value="tRNAsynth_Ia_anticodon-bd"/>
</dbReference>
<dbReference type="NCBIfam" id="TIGR00435">
    <property type="entry name" value="cysS"/>
    <property type="match status" value="1"/>
</dbReference>
<dbReference type="PANTHER" id="PTHR10890:SF30">
    <property type="entry name" value="CYSTEINE--TRNA LIGASE"/>
    <property type="match status" value="1"/>
</dbReference>
<dbReference type="PANTHER" id="PTHR10890">
    <property type="entry name" value="CYSTEINYL-TRNA SYNTHETASE"/>
    <property type="match status" value="1"/>
</dbReference>
<dbReference type="Pfam" id="PF09190">
    <property type="entry name" value="DALR_2"/>
    <property type="match status" value="1"/>
</dbReference>
<dbReference type="Pfam" id="PF01406">
    <property type="entry name" value="tRNA-synt_1e"/>
    <property type="match status" value="1"/>
</dbReference>
<dbReference type="PRINTS" id="PR00983">
    <property type="entry name" value="TRNASYNTHCYS"/>
</dbReference>
<dbReference type="SMART" id="SM00840">
    <property type="entry name" value="DALR_2"/>
    <property type="match status" value="1"/>
</dbReference>
<dbReference type="SUPFAM" id="SSF47323">
    <property type="entry name" value="Anticodon-binding domain of a subclass of class I aminoacyl-tRNA synthetases"/>
    <property type="match status" value="1"/>
</dbReference>
<dbReference type="SUPFAM" id="SSF52374">
    <property type="entry name" value="Nucleotidylyl transferase"/>
    <property type="match status" value="1"/>
</dbReference>
<feature type="chain" id="PRO_1000006595" description="Cysteine--tRNA ligase">
    <location>
        <begin position="1"/>
        <end position="469"/>
    </location>
</feature>
<feature type="short sequence motif" description="'HIGH' region">
    <location>
        <begin position="35"/>
        <end position="45"/>
    </location>
</feature>
<feature type="short sequence motif" description="'KMSKS' region">
    <location>
        <begin position="267"/>
        <end position="271"/>
    </location>
</feature>
<feature type="binding site" evidence="1">
    <location>
        <position position="33"/>
    </location>
    <ligand>
        <name>Zn(2+)</name>
        <dbReference type="ChEBI" id="CHEBI:29105"/>
    </ligand>
</feature>
<feature type="binding site" evidence="1">
    <location>
        <position position="211"/>
    </location>
    <ligand>
        <name>Zn(2+)</name>
        <dbReference type="ChEBI" id="CHEBI:29105"/>
    </ligand>
</feature>
<feature type="binding site" evidence="1">
    <location>
        <position position="236"/>
    </location>
    <ligand>
        <name>Zn(2+)</name>
        <dbReference type="ChEBI" id="CHEBI:29105"/>
    </ligand>
</feature>
<feature type="binding site" evidence="1">
    <location>
        <position position="240"/>
    </location>
    <ligand>
        <name>Zn(2+)</name>
        <dbReference type="ChEBI" id="CHEBI:29105"/>
    </ligand>
</feature>
<feature type="binding site" evidence="1">
    <location>
        <position position="270"/>
    </location>
    <ligand>
        <name>ATP</name>
        <dbReference type="ChEBI" id="CHEBI:30616"/>
    </ligand>
</feature>
<organism>
    <name type="scientific">Mycobacterium bovis (strain BCG / Pasteur 1173P2)</name>
    <dbReference type="NCBI Taxonomy" id="410289"/>
    <lineage>
        <taxon>Bacteria</taxon>
        <taxon>Bacillati</taxon>
        <taxon>Actinomycetota</taxon>
        <taxon>Actinomycetes</taxon>
        <taxon>Mycobacteriales</taxon>
        <taxon>Mycobacteriaceae</taxon>
        <taxon>Mycobacterium</taxon>
        <taxon>Mycobacterium tuberculosis complex</taxon>
    </lineage>
</organism>
<keyword id="KW-0030">Aminoacyl-tRNA synthetase</keyword>
<keyword id="KW-0067">ATP-binding</keyword>
<keyword id="KW-0963">Cytoplasm</keyword>
<keyword id="KW-0436">Ligase</keyword>
<keyword id="KW-0479">Metal-binding</keyword>
<keyword id="KW-0547">Nucleotide-binding</keyword>
<keyword id="KW-0648">Protein biosynthesis</keyword>
<keyword id="KW-0862">Zinc</keyword>
<comment type="catalytic activity">
    <reaction evidence="1">
        <text>tRNA(Cys) + L-cysteine + ATP = L-cysteinyl-tRNA(Cys) + AMP + diphosphate</text>
        <dbReference type="Rhea" id="RHEA:17773"/>
        <dbReference type="Rhea" id="RHEA-COMP:9661"/>
        <dbReference type="Rhea" id="RHEA-COMP:9679"/>
        <dbReference type="ChEBI" id="CHEBI:30616"/>
        <dbReference type="ChEBI" id="CHEBI:33019"/>
        <dbReference type="ChEBI" id="CHEBI:35235"/>
        <dbReference type="ChEBI" id="CHEBI:78442"/>
        <dbReference type="ChEBI" id="CHEBI:78517"/>
        <dbReference type="ChEBI" id="CHEBI:456215"/>
        <dbReference type="EC" id="6.1.1.16"/>
    </reaction>
</comment>
<comment type="cofactor">
    <cofactor evidence="1">
        <name>Zn(2+)</name>
        <dbReference type="ChEBI" id="CHEBI:29105"/>
    </cofactor>
    <text evidence="1">Binds 1 zinc ion per subunit.</text>
</comment>
<comment type="subunit">
    <text evidence="1">Monomer.</text>
</comment>
<comment type="subcellular location">
    <subcellularLocation>
        <location evidence="1">Cytoplasm</location>
    </subcellularLocation>
</comment>
<comment type="similarity">
    <text evidence="1">Belongs to the class-I aminoacyl-tRNA synthetase family.</text>
</comment>
<gene>
    <name evidence="1" type="primary">cysS</name>
    <name type="ordered locus">BCG_3645c</name>
</gene>
<evidence type="ECO:0000255" key="1">
    <source>
        <dbReference type="HAMAP-Rule" id="MF_00041"/>
    </source>
</evidence>
<protein>
    <recommendedName>
        <fullName evidence="1">Cysteine--tRNA ligase</fullName>
        <ecNumber evidence="1">6.1.1.16</ecNumber>
    </recommendedName>
    <alternativeName>
        <fullName evidence="1">Cysteinyl-tRNA synthetase</fullName>
        <shortName evidence="1">CysRS</shortName>
    </alternativeName>
</protein>
<accession>A1KPR6</accession>
<proteinExistence type="inferred from homology"/>